<evidence type="ECO:0000255" key="1">
    <source>
        <dbReference type="HAMAP-Rule" id="MF_01302"/>
    </source>
</evidence>
<evidence type="ECO:0000305" key="2"/>
<accession>A2RNN9</accession>
<comment type="function">
    <text evidence="1">One of the primary rRNA binding proteins, it binds directly to 16S rRNA central domain where it helps coordinate assembly of the platform of the 30S subunit.</text>
</comment>
<comment type="subunit">
    <text evidence="1">Part of the 30S ribosomal subunit. Contacts proteins S5 and S12.</text>
</comment>
<comment type="similarity">
    <text evidence="1">Belongs to the universal ribosomal protein uS8 family.</text>
</comment>
<proteinExistence type="evidence at protein level"/>
<name>RS8_LACLM</name>
<reference key="1">
    <citation type="journal article" date="2007" name="J. Bacteriol.">
        <title>The complete genome sequence of the lactic acid bacterial paradigm Lactococcus lactis subsp. cremoris MG1363.</title>
        <authorList>
            <person name="Wegmann U."/>
            <person name="O'Connell-Motherway M."/>
            <person name="Zomer A."/>
            <person name="Buist G."/>
            <person name="Shearman C."/>
            <person name="Canchaya C."/>
            <person name="Ventura M."/>
            <person name="Goesmann A."/>
            <person name="Gasson M.J."/>
            <person name="Kuipers O.P."/>
            <person name="van Sinderen D."/>
            <person name="Kok J."/>
        </authorList>
    </citation>
    <scope>NUCLEOTIDE SEQUENCE [LARGE SCALE GENOMIC DNA]</scope>
    <source>
        <strain>MG1363</strain>
    </source>
</reference>
<organism>
    <name type="scientific">Lactococcus lactis subsp. cremoris (strain MG1363)</name>
    <dbReference type="NCBI Taxonomy" id="416870"/>
    <lineage>
        <taxon>Bacteria</taxon>
        <taxon>Bacillati</taxon>
        <taxon>Bacillota</taxon>
        <taxon>Bacilli</taxon>
        <taxon>Lactobacillales</taxon>
        <taxon>Streptococcaceae</taxon>
        <taxon>Lactococcus</taxon>
        <taxon>Lactococcus cremoris subsp. cremoris</taxon>
    </lineage>
</organism>
<feature type="chain" id="PRO_0000290860" description="Small ribosomal subunit protein uS8">
    <location>
        <begin position="1"/>
        <end position="132"/>
    </location>
</feature>
<dbReference type="EMBL" id="AM406671">
    <property type="protein sequence ID" value="CAL98930.1"/>
    <property type="molecule type" value="Genomic_DNA"/>
</dbReference>
<dbReference type="RefSeq" id="WP_011677155.1">
    <property type="nucleotide sequence ID" value="NC_009004.1"/>
</dbReference>
<dbReference type="PDB" id="5MYJ">
    <property type="method" value="EM"/>
    <property type="resolution" value="5.60 A"/>
    <property type="chains" value="AH=1-132"/>
</dbReference>
<dbReference type="PDBsum" id="5MYJ"/>
<dbReference type="EMDB" id="EMD-3581"/>
<dbReference type="SMR" id="A2RNN9"/>
<dbReference type="STRING" id="416870.llmg_2367"/>
<dbReference type="GeneID" id="61110412"/>
<dbReference type="KEGG" id="llm:llmg_2367"/>
<dbReference type="eggNOG" id="COG0096">
    <property type="taxonomic scope" value="Bacteria"/>
</dbReference>
<dbReference type="HOGENOM" id="CLU_098428_0_2_9"/>
<dbReference type="OrthoDB" id="9802617at2"/>
<dbReference type="PhylomeDB" id="A2RNN9"/>
<dbReference type="Proteomes" id="UP000000364">
    <property type="component" value="Chromosome"/>
</dbReference>
<dbReference type="GO" id="GO:1990904">
    <property type="term" value="C:ribonucleoprotein complex"/>
    <property type="evidence" value="ECO:0007669"/>
    <property type="project" value="UniProtKB-KW"/>
</dbReference>
<dbReference type="GO" id="GO:0005840">
    <property type="term" value="C:ribosome"/>
    <property type="evidence" value="ECO:0007669"/>
    <property type="project" value="UniProtKB-KW"/>
</dbReference>
<dbReference type="GO" id="GO:0019843">
    <property type="term" value="F:rRNA binding"/>
    <property type="evidence" value="ECO:0007669"/>
    <property type="project" value="UniProtKB-UniRule"/>
</dbReference>
<dbReference type="GO" id="GO:0003735">
    <property type="term" value="F:structural constituent of ribosome"/>
    <property type="evidence" value="ECO:0007669"/>
    <property type="project" value="InterPro"/>
</dbReference>
<dbReference type="GO" id="GO:0006412">
    <property type="term" value="P:translation"/>
    <property type="evidence" value="ECO:0007669"/>
    <property type="project" value="UniProtKB-UniRule"/>
</dbReference>
<dbReference type="FunFam" id="3.30.1370.30:FF:000002">
    <property type="entry name" value="30S ribosomal protein S8"/>
    <property type="match status" value="1"/>
</dbReference>
<dbReference type="FunFam" id="3.30.1490.10:FF:000001">
    <property type="entry name" value="30S ribosomal protein S8"/>
    <property type="match status" value="1"/>
</dbReference>
<dbReference type="Gene3D" id="3.30.1370.30">
    <property type="match status" value="1"/>
</dbReference>
<dbReference type="Gene3D" id="3.30.1490.10">
    <property type="match status" value="1"/>
</dbReference>
<dbReference type="HAMAP" id="MF_01302_B">
    <property type="entry name" value="Ribosomal_uS8_B"/>
    <property type="match status" value="1"/>
</dbReference>
<dbReference type="InterPro" id="IPR000630">
    <property type="entry name" value="Ribosomal_uS8"/>
</dbReference>
<dbReference type="InterPro" id="IPR047863">
    <property type="entry name" value="Ribosomal_uS8_CS"/>
</dbReference>
<dbReference type="InterPro" id="IPR035987">
    <property type="entry name" value="Ribosomal_uS8_sf"/>
</dbReference>
<dbReference type="NCBIfam" id="NF001109">
    <property type="entry name" value="PRK00136.1"/>
    <property type="match status" value="1"/>
</dbReference>
<dbReference type="PANTHER" id="PTHR11758">
    <property type="entry name" value="40S RIBOSOMAL PROTEIN S15A"/>
    <property type="match status" value="1"/>
</dbReference>
<dbReference type="Pfam" id="PF00410">
    <property type="entry name" value="Ribosomal_S8"/>
    <property type="match status" value="1"/>
</dbReference>
<dbReference type="SUPFAM" id="SSF56047">
    <property type="entry name" value="Ribosomal protein S8"/>
    <property type="match status" value="1"/>
</dbReference>
<dbReference type="PROSITE" id="PS00053">
    <property type="entry name" value="RIBOSOMAL_S8"/>
    <property type="match status" value="1"/>
</dbReference>
<keyword id="KW-0002">3D-structure</keyword>
<keyword id="KW-0687">Ribonucleoprotein</keyword>
<keyword id="KW-0689">Ribosomal protein</keyword>
<keyword id="KW-0694">RNA-binding</keyword>
<keyword id="KW-0699">rRNA-binding</keyword>
<gene>
    <name evidence="1" type="primary">rpsH</name>
    <name type="ordered locus">llmg_2367</name>
</gene>
<protein>
    <recommendedName>
        <fullName evidence="1">Small ribosomal subunit protein uS8</fullName>
    </recommendedName>
    <alternativeName>
        <fullName evidence="2">30S ribosomal protein S8</fullName>
    </alternativeName>
</protein>
<sequence length="132" mass="14670">MVMTDPIADFLTRIRNGNMRKFDVVEAPASKIKRQIAEILKAEGYVKDVEYVEDNKQGVIRVFLKYGKNGEKVITNLKRISKPGLRVYVKSDDVPKVLNGLGTAIISTSTGVVTDKVARQTNVGGEVIAYIW</sequence>